<name>HMGN5_HUMAN</name>
<gene>
    <name type="primary">HMGN5</name>
    <name type="synonym">NSBP1</name>
</gene>
<evidence type="ECO:0000250" key="1"/>
<evidence type="ECO:0000256" key="2">
    <source>
        <dbReference type="SAM" id="MobiDB-lite"/>
    </source>
</evidence>
<evidence type="ECO:0000269" key="3">
    <source>
    </source>
</evidence>
<evidence type="ECO:0000305" key="4"/>
<evidence type="ECO:0007744" key="5">
    <source>
    </source>
</evidence>
<evidence type="ECO:0007744" key="6">
    <source>
    </source>
</evidence>
<evidence type="ECO:0007744" key="7">
    <source>
    </source>
</evidence>
<evidence type="ECO:0007744" key="8">
    <source>
    </source>
</evidence>
<evidence type="ECO:0007744" key="9">
    <source>
    </source>
</evidence>
<evidence type="ECO:0007744" key="10">
    <source>
    </source>
</evidence>
<evidence type="ECO:0007744" key="11">
    <source>
    </source>
</evidence>
<dbReference type="EMBL" id="AF250329">
    <property type="protein sequence ID" value="AAK14062.1"/>
    <property type="molecule type" value="mRNA"/>
</dbReference>
<dbReference type="EMBL" id="AF250330">
    <property type="protein sequence ID" value="AAK14063.1"/>
    <property type="molecule type" value="Genomic_DNA"/>
</dbReference>
<dbReference type="EMBL" id="AK094058">
    <property type="status" value="NOT_ANNOTATED_CDS"/>
    <property type="molecule type" value="mRNA"/>
</dbReference>
<dbReference type="EMBL" id="AL391294">
    <property type="status" value="NOT_ANNOTATED_CDS"/>
    <property type="molecule type" value="Genomic_DNA"/>
</dbReference>
<dbReference type="EMBL" id="CH471104">
    <property type="protein sequence ID" value="EAW98582.1"/>
    <property type="molecule type" value="Genomic_DNA"/>
</dbReference>
<dbReference type="EMBL" id="BC005342">
    <property type="protein sequence ID" value="AAH05342.1"/>
    <property type="molecule type" value="mRNA"/>
</dbReference>
<dbReference type="CCDS" id="CCDS14448.1"/>
<dbReference type="RefSeq" id="NP_110390.1">
    <property type="nucleotide sequence ID" value="NM_030763.3"/>
</dbReference>
<dbReference type="BioGRID" id="122655">
    <property type="interactions" value="151"/>
</dbReference>
<dbReference type="FunCoup" id="P82970">
    <property type="interactions" value="324"/>
</dbReference>
<dbReference type="IntAct" id="P82970">
    <property type="interactions" value="138"/>
</dbReference>
<dbReference type="MINT" id="P82970"/>
<dbReference type="STRING" id="9606.ENSP00000350848"/>
<dbReference type="GlyGen" id="P82970">
    <property type="glycosylation" value="1 site, 1 O-linked glycan (1 site)"/>
</dbReference>
<dbReference type="iPTMnet" id="P82970"/>
<dbReference type="MetOSite" id="P82970"/>
<dbReference type="PhosphoSitePlus" id="P82970"/>
<dbReference type="BioMuta" id="HMGN5"/>
<dbReference type="DMDM" id="23396771"/>
<dbReference type="jPOST" id="P82970"/>
<dbReference type="MassIVE" id="P82970"/>
<dbReference type="PaxDb" id="9606-ENSP00000350848"/>
<dbReference type="PeptideAtlas" id="P82970"/>
<dbReference type="ProteomicsDB" id="57725"/>
<dbReference type="Pumba" id="P82970"/>
<dbReference type="TopDownProteomics" id="P82970"/>
<dbReference type="Antibodypedia" id="391">
    <property type="antibodies" value="135 antibodies from 24 providers"/>
</dbReference>
<dbReference type="DNASU" id="79366"/>
<dbReference type="Ensembl" id="ENST00000358130.7">
    <property type="protein sequence ID" value="ENSP00000350848.2"/>
    <property type="gene ID" value="ENSG00000198157.11"/>
</dbReference>
<dbReference type="GeneID" id="79366"/>
<dbReference type="KEGG" id="hsa:79366"/>
<dbReference type="MANE-Select" id="ENST00000358130.7">
    <property type="protein sequence ID" value="ENSP00000350848.2"/>
    <property type="RefSeq nucleotide sequence ID" value="NM_030763.3"/>
    <property type="RefSeq protein sequence ID" value="NP_110390.1"/>
</dbReference>
<dbReference type="UCSC" id="uc004eee.1">
    <property type="organism name" value="human"/>
</dbReference>
<dbReference type="AGR" id="HGNC:8013"/>
<dbReference type="CTD" id="79366"/>
<dbReference type="DisGeNET" id="79366"/>
<dbReference type="GeneCards" id="HMGN5"/>
<dbReference type="HGNC" id="HGNC:8013">
    <property type="gene designation" value="HMGN5"/>
</dbReference>
<dbReference type="HPA" id="ENSG00000198157">
    <property type="expression patterns" value="Tissue enhanced (testis)"/>
</dbReference>
<dbReference type="MIM" id="300385">
    <property type="type" value="gene"/>
</dbReference>
<dbReference type="neXtProt" id="NX_P82970"/>
<dbReference type="OpenTargets" id="ENSG00000198157"/>
<dbReference type="PharmGKB" id="PA31789"/>
<dbReference type="VEuPathDB" id="HostDB:ENSG00000198157"/>
<dbReference type="eggNOG" id="ENOG502QQGX">
    <property type="taxonomic scope" value="Eukaryota"/>
</dbReference>
<dbReference type="GeneTree" id="ENSGT00730000111570"/>
<dbReference type="HOGENOM" id="CLU_082746_0_0_1"/>
<dbReference type="InParanoid" id="P82970"/>
<dbReference type="OMA" id="ELECEKD"/>
<dbReference type="OrthoDB" id="9540224at2759"/>
<dbReference type="PAN-GO" id="P82970">
    <property type="GO annotations" value="0 GO annotations based on evolutionary models"/>
</dbReference>
<dbReference type="PhylomeDB" id="P82970"/>
<dbReference type="PathwayCommons" id="P82970"/>
<dbReference type="SignaLink" id="P82970"/>
<dbReference type="BioGRID-ORCS" id="79366">
    <property type="hits" value="58 hits in 751 CRISPR screens"/>
</dbReference>
<dbReference type="ChiTaRS" id="HMGN5">
    <property type="organism name" value="human"/>
</dbReference>
<dbReference type="GenomeRNAi" id="79366"/>
<dbReference type="Pharos" id="P82970">
    <property type="development level" value="Tbio"/>
</dbReference>
<dbReference type="PRO" id="PR:P82970"/>
<dbReference type="Proteomes" id="UP000005640">
    <property type="component" value="Chromosome X"/>
</dbReference>
<dbReference type="RNAct" id="P82970">
    <property type="molecule type" value="protein"/>
</dbReference>
<dbReference type="Bgee" id="ENSG00000198157">
    <property type="expression patterns" value="Expressed in sural nerve and 152 other cell types or tissues"/>
</dbReference>
<dbReference type="ExpressionAtlas" id="P82970">
    <property type="expression patterns" value="baseline and differential"/>
</dbReference>
<dbReference type="GO" id="GO:0000785">
    <property type="term" value="C:chromatin"/>
    <property type="evidence" value="ECO:0007669"/>
    <property type="project" value="InterPro"/>
</dbReference>
<dbReference type="GO" id="GO:0005739">
    <property type="term" value="C:mitochondrion"/>
    <property type="evidence" value="ECO:0000314"/>
    <property type="project" value="HPA"/>
</dbReference>
<dbReference type="GO" id="GO:0005654">
    <property type="term" value="C:nucleoplasm"/>
    <property type="evidence" value="ECO:0000314"/>
    <property type="project" value="HPA"/>
</dbReference>
<dbReference type="GO" id="GO:0005634">
    <property type="term" value="C:nucleus"/>
    <property type="evidence" value="ECO:0000303"/>
    <property type="project" value="UniProtKB"/>
</dbReference>
<dbReference type="GO" id="GO:0003682">
    <property type="term" value="F:chromatin binding"/>
    <property type="evidence" value="ECO:0000303"/>
    <property type="project" value="UniProtKB"/>
</dbReference>
<dbReference type="GO" id="GO:0031492">
    <property type="term" value="F:nucleosomal DNA binding"/>
    <property type="evidence" value="ECO:0007669"/>
    <property type="project" value="InterPro"/>
</dbReference>
<dbReference type="GO" id="GO:0003723">
    <property type="term" value="F:RNA binding"/>
    <property type="evidence" value="ECO:0007005"/>
    <property type="project" value="UniProtKB"/>
</dbReference>
<dbReference type="GO" id="GO:0006325">
    <property type="term" value="P:chromatin organization"/>
    <property type="evidence" value="ECO:0007669"/>
    <property type="project" value="UniProtKB-KW"/>
</dbReference>
<dbReference type="GO" id="GO:0043066">
    <property type="term" value="P:negative regulation of apoptotic process"/>
    <property type="evidence" value="ECO:0000315"/>
    <property type="project" value="CACAO"/>
</dbReference>
<dbReference type="GO" id="GO:0008284">
    <property type="term" value="P:positive regulation of cell population proliferation"/>
    <property type="evidence" value="ECO:0000315"/>
    <property type="project" value="CACAO"/>
</dbReference>
<dbReference type="GO" id="GO:0045893">
    <property type="term" value="P:positive regulation of DNA-templated transcription"/>
    <property type="evidence" value="ECO:0000303"/>
    <property type="project" value="UniProtKB"/>
</dbReference>
<dbReference type="GO" id="GO:0010628">
    <property type="term" value="P:positive regulation of gene expression"/>
    <property type="evidence" value="ECO:0000315"/>
    <property type="project" value="CACAO"/>
</dbReference>
<dbReference type="GO" id="GO:0006355">
    <property type="term" value="P:regulation of DNA-templated transcription"/>
    <property type="evidence" value="ECO:0000303"/>
    <property type="project" value="UniProtKB"/>
</dbReference>
<dbReference type="InterPro" id="IPR040164">
    <property type="entry name" value="HMGN5"/>
</dbReference>
<dbReference type="InterPro" id="IPR000079">
    <property type="entry name" value="HMGN_fam"/>
</dbReference>
<dbReference type="PANTHER" id="PTHR23145:SF6">
    <property type="entry name" value="HIGH MOBILITY GROUP NUCLEOSOME-BINDING DOMAIN-CONTAINING PROTEIN 5"/>
    <property type="match status" value="1"/>
</dbReference>
<dbReference type="PANTHER" id="PTHR23145">
    <property type="entry name" value="NUCLEOSOMAL BINDING PROTEIN 1"/>
    <property type="match status" value="1"/>
</dbReference>
<dbReference type="Pfam" id="PF01101">
    <property type="entry name" value="HMG14_17"/>
    <property type="match status" value="1"/>
</dbReference>
<dbReference type="PRINTS" id="PR00925">
    <property type="entry name" value="NONHISHMG17"/>
</dbReference>
<dbReference type="SMART" id="SM00527">
    <property type="entry name" value="HMG17"/>
    <property type="match status" value="1"/>
</dbReference>
<dbReference type="PROSITE" id="PS00355">
    <property type="entry name" value="HMG14_17"/>
    <property type="match status" value="1"/>
</dbReference>
<comment type="function">
    <text evidence="1">Preferentially binds to euchromatin and modulates cellular transcription by counteracting linker histone-mediated chromatin compaction.</text>
</comment>
<comment type="subcellular location">
    <subcellularLocation>
        <location evidence="3">Nucleus</location>
    </subcellularLocation>
    <text evidence="1">Associates with nucleosomes in euchromatin and is largely excluded from constitutive heterochromatin.</text>
</comment>
<comment type="tissue specificity">
    <text evidence="3">Ubiquitously expressed.</text>
</comment>
<comment type="domain">
    <text evidence="1">Specifically targeted by its C-terminus to nucleosomes in euchromatin.</text>
</comment>
<comment type="similarity">
    <text evidence="4">Belongs to the HMGN family.</text>
</comment>
<comment type="sequence caution" evidence="4">
    <conflict type="frameshift">
        <sequence resource="EMBL" id="AK094058"/>
    </conflict>
</comment>
<proteinExistence type="evidence at protein level"/>
<keyword id="KW-0156">Chromatin regulator</keyword>
<keyword id="KW-0238">DNA-binding</keyword>
<keyword id="KW-1017">Isopeptide bond</keyword>
<keyword id="KW-0539">Nucleus</keyword>
<keyword id="KW-0597">Phosphoprotein</keyword>
<keyword id="KW-1267">Proteomics identification</keyword>
<keyword id="KW-1185">Reference proteome</keyword>
<keyword id="KW-0804">Transcription</keyword>
<keyword id="KW-0805">Transcription regulation</keyword>
<keyword id="KW-0832">Ubl conjugation</keyword>
<accession>P82970</accession>
<accession>Q5JSL1</accession>
<sequence length="282" mass="31525">MPKRKAAGQGDMRQEPKRRSARLSAMLVPVTPEVKPKRTSSSRKMKTKSDMMEENIDTSAQAVAETKQEAVVEEDYNENAKNGEAKITEAPASEKEIVEVKEENIEDATEKGGEKKEAVAAEVKNEEEDQKEDEEDQNEEKGEAGKEDKDEKGEEDGKEDKNGNEKGEDAKEKEDGKKGEDGKGNGEDGKEKGEDEKEEEDRKETGDGKENEDGKEKGDKKEGKDVKVKEDEKEREDGKEDEGGNEEEAGKEKEDLKEEEEGKEEDEIKEDDGKKEEPQSIV</sequence>
<reference key="1">
    <citation type="journal article" date="2001" name="Genomics">
        <title>Characterization of a human gene encoding nucleosomal binding protein NSBP1.</title>
        <authorList>
            <person name="King L.M."/>
            <person name="Francomano C.A."/>
        </authorList>
    </citation>
    <scope>NUCLEOTIDE SEQUENCE [GENOMIC DNA / MRNA]</scope>
    <scope>SUBCELLULAR LOCATION</scope>
    <scope>TISSUE SPECIFICITY</scope>
    <source>
        <tissue>Bone marrow stroma</tissue>
        <tissue>Brain</tissue>
    </source>
</reference>
<reference key="2">
    <citation type="journal article" date="2004" name="Nat. Genet.">
        <title>Complete sequencing and characterization of 21,243 full-length human cDNAs.</title>
        <authorList>
            <person name="Ota T."/>
            <person name="Suzuki Y."/>
            <person name="Nishikawa T."/>
            <person name="Otsuki T."/>
            <person name="Sugiyama T."/>
            <person name="Irie R."/>
            <person name="Wakamatsu A."/>
            <person name="Hayashi K."/>
            <person name="Sato H."/>
            <person name="Nagai K."/>
            <person name="Kimura K."/>
            <person name="Makita H."/>
            <person name="Sekine M."/>
            <person name="Obayashi M."/>
            <person name="Nishi T."/>
            <person name="Shibahara T."/>
            <person name="Tanaka T."/>
            <person name="Ishii S."/>
            <person name="Yamamoto J."/>
            <person name="Saito K."/>
            <person name="Kawai Y."/>
            <person name="Isono Y."/>
            <person name="Nakamura Y."/>
            <person name="Nagahari K."/>
            <person name="Murakami K."/>
            <person name="Yasuda T."/>
            <person name="Iwayanagi T."/>
            <person name="Wagatsuma M."/>
            <person name="Shiratori A."/>
            <person name="Sudo H."/>
            <person name="Hosoiri T."/>
            <person name="Kaku Y."/>
            <person name="Kodaira H."/>
            <person name="Kondo H."/>
            <person name="Sugawara M."/>
            <person name="Takahashi M."/>
            <person name="Kanda K."/>
            <person name="Yokoi T."/>
            <person name="Furuya T."/>
            <person name="Kikkawa E."/>
            <person name="Omura Y."/>
            <person name="Abe K."/>
            <person name="Kamihara K."/>
            <person name="Katsuta N."/>
            <person name="Sato K."/>
            <person name="Tanikawa M."/>
            <person name="Yamazaki M."/>
            <person name="Ninomiya K."/>
            <person name="Ishibashi T."/>
            <person name="Yamashita H."/>
            <person name="Murakawa K."/>
            <person name="Fujimori K."/>
            <person name="Tanai H."/>
            <person name="Kimata M."/>
            <person name="Watanabe M."/>
            <person name="Hiraoka S."/>
            <person name="Chiba Y."/>
            <person name="Ishida S."/>
            <person name="Ono Y."/>
            <person name="Takiguchi S."/>
            <person name="Watanabe S."/>
            <person name="Yosida M."/>
            <person name="Hotuta T."/>
            <person name="Kusano J."/>
            <person name="Kanehori K."/>
            <person name="Takahashi-Fujii A."/>
            <person name="Hara H."/>
            <person name="Tanase T.-O."/>
            <person name="Nomura Y."/>
            <person name="Togiya S."/>
            <person name="Komai F."/>
            <person name="Hara R."/>
            <person name="Takeuchi K."/>
            <person name="Arita M."/>
            <person name="Imose N."/>
            <person name="Musashino K."/>
            <person name="Yuuki H."/>
            <person name="Oshima A."/>
            <person name="Sasaki N."/>
            <person name="Aotsuka S."/>
            <person name="Yoshikawa Y."/>
            <person name="Matsunawa H."/>
            <person name="Ichihara T."/>
            <person name="Shiohata N."/>
            <person name="Sano S."/>
            <person name="Moriya S."/>
            <person name="Momiyama H."/>
            <person name="Satoh N."/>
            <person name="Takami S."/>
            <person name="Terashima Y."/>
            <person name="Suzuki O."/>
            <person name="Nakagawa S."/>
            <person name="Senoh A."/>
            <person name="Mizoguchi H."/>
            <person name="Goto Y."/>
            <person name="Shimizu F."/>
            <person name="Wakebe H."/>
            <person name="Hishigaki H."/>
            <person name="Watanabe T."/>
            <person name="Sugiyama A."/>
            <person name="Takemoto M."/>
            <person name="Kawakami B."/>
            <person name="Yamazaki M."/>
            <person name="Watanabe K."/>
            <person name="Kumagai A."/>
            <person name="Itakura S."/>
            <person name="Fukuzumi Y."/>
            <person name="Fujimori Y."/>
            <person name="Komiyama M."/>
            <person name="Tashiro H."/>
            <person name="Tanigami A."/>
            <person name="Fujiwara T."/>
            <person name="Ono T."/>
            <person name="Yamada K."/>
            <person name="Fujii Y."/>
            <person name="Ozaki K."/>
            <person name="Hirao M."/>
            <person name="Ohmori Y."/>
            <person name="Kawabata A."/>
            <person name="Hikiji T."/>
            <person name="Kobatake N."/>
            <person name="Inagaki H."/>
            <person name="Ikema Y."/>
            <person name="Okamoto S."/>
            <person name="Okitani R."/>
            <person name="Kawakami T."/>
            <person name="Noguchi S."/>
            <person name="Itoh T."/>
            <person name="Shigeta K."/>
            <person name="Senba T."/>
            <person name="Matsumura K."/>
            <person name="Nakajima Y."/>
            <person name="Mizuno T."/>
            <person name="Morinaga M."/>
            <person name="Sasaki M."/>
            <person name="Togashi T."/>
            <person name="Oyama M."/>
            <person name="Hata H."/>
            <person name="Watanabe M."/>
            <person name="Komatsu T."/>
            <person name="Mizushima-Sugano J."/>
            <person name="Satoh T."/>
            <person name="Shirai Y."/>
            <person name="Takahashi Y."/>
            <person name="Nakagawa K."/>
            <person name="Okumura K."/>
            <person name="Nagase T."/>
            <person name="Nomura N."/>
            <person name="Kikuchi H."/>
            <person name="Masuho Y."/>
            <person name="Yamashita R."/>
            <person name="Nakai K."/>
            <person name="Yada T."/>
            <person name="Nakamura Y."/>
            <person name="Ohara O."/>
            <person name="Isogai T."/>
            <person name="Sugano S."/>
        </authorList>
    </citation>
    <scope>NUCLEOTIDE SEQUENCE [LARGE SCALE MRNA]</scope>
    <source>
        <tissue>Uterus</tissue>
    </source>
</reference>
<reference key="3">
    <citation type="journal article" date="2005" name="Nature">
        <title>The DNA sequence of the human X chromosome.</title>
        <authorList>
            <person name="Ross M.T."/>
            <person name="Grafham D.V."/>
            <person name="Coffey A.J."/>
            <person name="Scherer S."/>
            <person name="McLay K."/>
            <person name="Muzny D."/>
            <person name="Platzer M."/>
            <person name="Howell G.R."/>
            <person name="Burrows C."/>
            <person name="Bird C.P."/>
            <person name="Frankish A."/>
            <person name="Lovell F.L."/>
            <person name="Howe K.L."/>
            <person name="Ashurst J.L."/>
            <person name="Fulton R.S."/>
            <person name="Sudbrak R."/>
            <person name="Wen G."/>
            <person name="Jones M.C."/>
            <person name="Hurles M.E."/>
            <person name="Andrews T.D."/>
            <person name="Scott C.E."/>
            <person name="Searle S."/>
            <person name="Ramser J."/>
            <person name="Whittaker A."/>
            <person name="Deadman R."/>
            <person name="Carter N.P."/>
            <person name="Hunt S.E."/>
            <person name="Chen R."/>
            <person name="Cree A."/>
            <person name="Gunaratne P."/>
            <person name="Havlak P."/>
            <person name="Hodgson A."/>
            <person name="Metzker M.L."/>
            <person name="Richards S."/>
            <person name="Scott G."/>
            <person name="Steffen D."/>
            <person name="Sodergren E."/>
            <person name="Wheeler D.A."/>
            <person name="Worley K.C."/>
            <person name="Ainscough R."/>
            <person name="Ambrose K.D."/>
            <person name="Ansari-Lari M.A."/>
            <person name="Aradhya S."/>
            <person name="Ashwell R.I."/>
            <person name="Babbage A.K."/>
            <person name="Bagguley C.L."/>
            <person name="Ballabio A."/>
            <person name="Banerjee R."/>
            <person name="Barker G.E."/>
            <person name="Barlow K.F."/>
            <person name="Barrett I.P."/>
            <person name="Bates K.N."/>
            <person name="Beare D.M."/>
            <person name="Beasley H."/>
            <person name="Beasley O."/>
            <person name="Beck A."/>
            <person name="Bethel G."/>
            <person name="Blechschmidt K."/>
            <person name="Brady N."/>
            <person name="Bray-Allen S."/>
            <person name="Bridgeman A.M."/>
            <person name="Brown A.J."/>
            <person name="Brown M.J."/>
            <person name="Bonnin D."/>
            <person name="Bruford E.A."/>
            <person name="Buhay C."/>
            <person name="Burch P."/>
            <person name="Burford D."/>
            <person name="Burgess J."/>
            <person name="Burrill W."/>
            <person name="Burton J."/>
            <person name="Bye J.M."/>
            <person name="Carder C."/>
            <person name="Carrel L."/>
            <person name="Chako J."/>
            <person name="Chapman J.C."/>
            <person name="Chavez D."/>
            <person name="Chen E."/>
            <person name="Chen G."/>
            <person name="Chen Y."/>
            <person name="Chen Z."/>
            <person name="Chinault C."/>
            <person name="Ciccodicola A."/>
            <person name="Clark S.Y."/>
            <person name="Clarke G."/>
            <person name="Clee C.M."/>
            <person name="Clegg S."/>
            <person name="Clerc-Blankenburg K."/>
            <person name="Clifford K."/>
            <person name="Cobley V."/>
            <person name="Cole C.G."/>
            <person name="Conquer J.S."/>
            <person name="Corby N."/>
            <person name="Connor R.E."/>
            <person name="David R."/>
            <person name="Davies J."/>
            <person name="Davis C."/>
            <person name="Davis J."/>
            <person name="Delgado O."/>
            <person name="Deshazo D."/>
            <person name="Dhami P."/>
            <person name="Ding Y."/>
            <person name="Dinh H."/>
            <person name="Dodsworth S."/>
            <person name="Draper H."/>
            <person name="Dugan-Rocha S."/>
            <person name="Dunham A."/>
            <person name="Dunn M."/>
            <person name="Durbin K.J."/>
            <person name="Dutta I."/>
            <person name="Eades T."/>
            <person name="Ellwood M."/>
            <person name="Emery-Cohen A."/>
            <person name="Errington H."/>
            <person name="Evans K.L."/>
            <person name="Faulkner L."/>
            <person name="Francis F."/>
            <person name="Frankland J."/>
            <person name="Fraser A.E."/>
            <person name="Galgoczy P."/>
            <person name="Gilbert J."/>
            <person name="Gill R."/>
            <person name="Gloeckner G."/>
            <person name="Gregory S.G."/>
            <person name="Gribble S."/>
            <person name="Griffiths C."/>
            <person name="Grocock R."/>
            <person name="Gu Y."/>
            <person name="Gwilliam R."/>
            <person name="Hamilton C."/>
            <person name="Hart E.A."/>
            <person name="Hawes A."/>
            <person name="Heath P.D."/>
            <person name="Heitmann K."/>
            <person name="Hennig S."/>
            <person name="Hernandez J."/>
            <person name="Hinzmann B."/>
            <person name="Ho S."/>
            <person name="Hoffs M."/>
            <person name="Howden P.J."/>
            <person name="Huckle E.J."/>
            <person name="Hume J."/>
            <person name="Hunt P.J."/>
            <person name="Hunt A.R."/>
            <person name="Isherwood J."/>
            <person name="Jacob L."/>
            <person name="Johnson D."/>
            <person name="Jones S."/>
            <person name="de Jong P.J."/>
            <person name="Joseph S.S."/>
            <person name="Keenan S."/>
            <person name="Kelly S."/>
            <person name="Kershaw J.K."/>
            <person name="Khan Z."/>
            <person name="Kioschis P."/>
            <person name="Klages S."/>
            <person name="Knights A.J."/>
            <person name="Kosiura A."/>
            <person name="Kovar-Smith C."/>
            <person name="Laird G.K."/>
            <person name="Langford C."/>
            <person name="Lawlor S."/>
            <person name="Leversha M."/>
            <person name="Lewis L."/>
            <person name="Liu W."/>
            <person name="Lloyd C."/>
            <person name="Lloyd D.M."/>
            <person name="Loulseged H."/>
            <person name="Loveland J.E."/>
            <person name="Lovell J.D."/>
            <person name="Lozado R."/>
            <person name="Lu J."/>
            <person name="Lyne R."/>
            <person name="Ma J."/>
            <person name="Maheshwari M."/>
            <person name="Matthews L.H."/>
            <person name="McDowall J."/>
            <person name="McLaren S."/>
            <person name="McMurray A."/>
            <person name="Meidl P."/>
            <person name="Meitinger T."/>
            <person name="Milne S."/>
            <person name="Miner G."/>
            <person name="Mistry S.L."/>
            <person name="Morgan M."/>
            <person name="Morris S."/>
            <person name="Mueller I."/>
            <person name="Mullikin J.C."/>
            <person name="Nguyen N."/>
            <person name="Nordsiek G."/>
            <person name="Nyakatura G."/>
            <person name="O'dell C.N."/>
            <person name="Okwuonu G."/>
            <person name="Palmer S."/>
            <person name="Pandian R."/>
            <person name="Parker D."/>
            <person name="Parrish J."/>
            <person name="Pasternak S."/>
            <person name="Patel D."/>
            <person name="Pearce A.V."/>
            <person name="Pearson D.M."/>
            <person name="Pelan S.E."/>
            <person name="Perez L."/>
            <person name="Porter K.M."/>
            <person name="Ramsey Y."/>
            <person name="Reichwald K."/>
            <person name="Rhodes S."/>
            <person name="Ridler K.A."/>
            <person name="Schlessinger D."/>
            <person name="Schueler M.G."/>
            <person name="Sehra H.K."/>
            <person name="Shaw-Smith C."/>
            <person name="Shen H."/>
            <person name="Sheridan E.M."/>
            <person name="Shownkeen R."/>
            <person name="Skuce C.D."/>
            <person name="Smith M.L."/>
            <person name="Sotheran E.C."/>
            <person name="Steingruber H.E."/>
            <person name="Steward C.A."/>
            <person name="Storey R."/>
            <person name="Swann R.M."/>
            <person name="Swarbreck D."/>
            <person name="Tabor P.E."/>
            <person name="Taudien S."/>
            <person name="Taylor T."/>
            <person name="Teague B."/>
            <person name="Thomas K."/>
            <person name="Thorpe A."/>
            <person name="Timms K."/>
            <person name="Tracey A."/>
            <person name="Trevanion S."/>
            <person name="Tromans A.C."/>
            <person name="d'Urso M."/>
            <person name="Verduzco D."/>
            <person name="Villasana D."/>
            <person name="Waldron L."/>
            <person name="Wall M."/>
            <person name="Wang Q."/>
            <person name="Warren J."/>
            <person name="Warry G.L."/>
            <person name="Wei X."/>
            <person name="West A."/>
            <person name="Whitehead S.L."/>
            <person name="Whiteley M.N."/>
            <person name="Wilkinson J.E."/>
            <person name="Willey D.L."/>
            <person name="Williams G."/>
            <person name="Williams L."/>
            <person name="Williamson A."/>
            <person name="Williamson H."/>
            <person name="Wilming L."/>
            <person name="Woodmansey R.L."/>
            <person name="Wray P.W."/>
            <person name="Yen J."/>
            <person name="Zhang J."/>
            <person name="Zhou J."/>
            <person name="Zoghbi H."/>
            <person name="Zorilla S."/>
            <person name="Buck D."/>
            <person name="Reinhardt R."/>
            <person name="Poustka A."/>
            <person name="Rosenthal A."/>
            <person name="Lehrach H."/>
            <person name="Meindl A."/>
            <person name="Minx P.J."/>
            <person name="Hillier L.W."/>
            <person name="Willard H.F."/>
            <person name="Wilson R.K."/>
            <person name="Waterston R.H."/>
            <person name="Rice C.M."/>
            <person name="Vaudin M."/>
            <person name="Coulson A."/>
            <person name="Nelson D.L."/>
            <person name="Weinstock G."/>
            <person name="Sulston J.E."/>
            <person name="Durbin R.M."/>
            <person name="Hubbard T."/>
            <person name="Gibbs R.A."/>
            <person name="Beck S."/>
            <person name="Rogers J."/>
            <person name="Bentley D.R."/>
        </authorList>
    </citation>
    <scope>NUCLEOTIDE SEQUENCE [LARGE SCALE GENOMIC DNA]</scope>
</reference>
<reference key="4">
    <citation type="submission" date="2005-09" db="EMBL/GenBank/DDBJ databases">
        <authorList>
            <person name="Mural R.J."/>
            <person name="Istrail S."/>
            <person name="Sutton G.G."/>
            <person name="Florea L."/>
            <person name="Halpern A.L."/>
            <person name="Mobarry C.M."/>
            <person name="Lippert R."/>
            <person name="Walenz B."/>
            <person name="Shatkay H."/>
            <person name="Dew I."/>
            <person name="Miller J.R."/>
            <person name="Flanigan M.J."/>
            <person name="Edwards N.J."/>
            <person name="Bolanos R."/>
            <person name="Fasulo D."/>
            <person name="Halldorsson B.V."/>
            <person name="Hannenhalli S."/>
            <person name="Turner R."/>
            <person name="Yooseph S."/>
            <person name="Lu F."/>
            <person name="Nusskern D.R."/>
            <person name="Shue B.C."/>
            <person name="Zheng X.H."/>
            <person name="Zhong F."/>
            <person name="Delcher A.L."/>
            <person name="Huson D.H."/>
            <person name="Kravitz S.A."/>
            <person name="Mouchard L."/>
            <person name="Reinert K."/>
            <person name="Remington K.A."/>
            <person name="Clark A.G."/>
            <person name="Waterman M.S."/>
            <person name="Eichler E.E."/>
            <person name="Adams M.D."/>
            <person name="Hunkapiller M.W."/>
            <person name="Myers E.W."/>
            <person name="Venter J.C."/>
        </authorList>
    </citation>
    <scope>NUCLEOTIDE SEQUENCE [LARGE SCALE GENOMIC DNA]</scope>
</reference>
<reference key="5">
    <citation type="journal article" date="2004" name="Genome Res.">
        <title>The status, quality, and expansion of the NIH full-length cDNA project: the Mammalian Gene Collection (MGC).</title>
        <authorList>
            <consortium name="The MGC Project Team"/>
        </authorList>
    </citation>
    <scope>NUCLEOTIDE SEQUENCE [LARGE SCALE MRNA]</scope>
    <source>
        <tissue>Bone marrow</tissue>
    </source>
</reference>
<reference key="6">
    <citation type="journal article" date="2005" name="Nat. Biotechnol.">
        <title>Immunoaffinity profiling of tyrosine phosphorylation in cancer cells.</title>
        <authorList>
            <person name="Rush J."/>
            <person name="Moritz A."/>
            <person name="Lee K.A."/>
            <person name="Guo A."/>
            <person name="Goss V.L."/>
            <person name="Spek E.J."/>
            <person name="Zhang H."/>
            <person name="Zha X.-M."/>
            <person name="Polakiewicz R.D."/>
            <person name="Comb M.J."/>
        </authorList>
    </citation>
    <scope>PHOSPHORYLATION [LARGE SCALE ANALYSIS] AT TYR-76</scope>
    <scope>IDENTIFICATION BY MASS SPECTROMETRY [LARGE SCALE ANALYSIS]</scope>
</reference>
<reference key="7">
    <citation type="journal article" date="2008" name="Proc. Natl. Acad. Sci. U.S.A.">
        <title>A quantitative atlas of mitotic phosphorylation.</title>
        <authorList>
            <person name="Dephoure N."/>
            <person name="Zhou C."/>
            <person name="Villen J."/>
            <person name="Beausoleil S.A."/>
            <person name="Bakalarski C.E."/>
            <person name="Elledge S.J."/>
            <person name="Gygi S.P."/>
        </authorList>
    </citation>
    <scope>IDENTIFICATION BY MASS SPECTROMETRY [LARGE SCALE ANALYSIS]</scope>
    <source>
        <tissue>Cervix carcinoma</tissue>
    </source>
</reference>
<reference key="8">
    <citation type="journal article" date="2010" name="Sci. Signal.">
        <title>Quantitative phosphoproteomics reveals widespread full phosphorylation site occupancy during mitosis.</title>
        <authorList>
            <person name="Olsen J.V."/>
            <person name="Vermeulen M."/>
            <person name="Santamaria A."/>
            <person name="Kumar C."/>
            <person name="Miller M.L."/>
            <person name="Jensen L.J."/>
            <person name="Gnad F."/>
            <person name="Cox J."/>
            <person name="Jensen T.S."/>
            <person name="Nigg E.A."/>
            <person name="Brunak S."/>
            <person name="Mann M."/>
        </authorList>
    </citation>
    <scope>PHOSPHORYLATION [LARGE SCALE ANALYSIS] AT THR-31</scope>
    <scope>IDENTIFICATION BY MASS SPECTROMETRY [LARGE SCALE ANALYSIS]</scope>
    <source>
        <tissue>Cervix carcinoma</tissue>
    </source>
</reference>
<reference key="9">
    <citation type="journal article" date="2011" name="BMC Syst. Biol.">
        <title>Initial characterization of the human central proteome.</title>
        <authorList>
            <person name="Burkard T.R."/>
            <person name="Planyavsky M."/>
            <person name="Kaupe I."/>
            <person name="Breitwieser F.P."/>
            <person name="Buerckstuemmer T."/>
            <person name="Bennett K.L."/>
            <person name="Superti-Furga G."/>
            <person name="Colinge J."/>
        </authorList>
    </citation>
    <scope>IDENTIFICATION BY MASS SPECTROMETRY [LARGE SCALE ANALYSIS]</scope>
</reference>
<reference key="10">
    <citation type="journal article" date="2013" name="J. Proteome Res.">
        <title>Toward a comprehensive characterization of a human cancer cell phosphoproteome.</title>
        <authorList>
            <person name="Zhou H."/>
            <person name="Di Palma S."/>
            <person name="Preisinger C."/>
            <person name="Peng M."/>
            <person name="Polat A.N."/>
            <person name="Heck A.J."/>
            <person name="Mohammed S."/>
        </authorList>
    </citation>
    <scope>PHOSPHORYLATION [LARGE SCALE ANALYSIS] AT THR-31 AND SER-93</scope>
    <scope>IDENTIFICATION BY MASS SPECTROMETRY [LARGE SCALE ANALYSIS]</scope>
    <source>
        <tissue>Cervix carcinoma</tissue>
        <tissue>Erythroleukemia</tissue>
    </source>
</reference>
<reference key="11">
    <citation type="journal article" date="2014" name="Nat. Struct. Mol. Biol.">
        <title>Uncovering global SUMOylation signaling networks in a site-specific manner.</title>
        <authorList>
            <person name="Hendriks I.A."/>
            <person name="D'Souza R.C."/>
            <person name="Yang B."/>
            <person name="Verlaan-de Vries M."/>
            <person name="Mann M."/>
            <person name="Vertegaal A.C."/>
        </authorList>
    </citation>
    <scope>SUMOYLATION [LARGE SCALE ANALYSIS] AT LYS-67; LYS-101 AND LYS-124</scope>
    <scope>IDENTIFICATION BY MASS SPECTROMETRY [LARGE SCALE ANALYSIS]</scope>
</reference>
<reference key="12">
    <citation type="journal article" date="2014" name="Proc. Natl. Acad. Sci. U.S.A.">
        <title>Mapping of SUMO sites and analysis of SUMOylation changes induced by external stimuli.</title>
        <authorList>
            <person name="Impens F."/>
            <person name="Radoshevich L."/>
            <person name="Cossart P."/>
            <person name="Ribet D."/>
        </authorList>
    </citation>
    <scope>SUMOYLATION [LARGE SCALE ANALYSIS] AT LYS-101</scope>
    <scope>IDENTIFICATION BY MASS SPECTROMETRY [LARGE SCALE ANALYSIS]</scope>
</reference>
<reference key="13">
    <citation type="journal article" date="2015" name="Cell Rep.">
        <title>SUMO-2 orchestrates chromatin modifiers in response to DNA damage.</title>
        <authorList>
            <person name="Hendriks I.A."/>
            <person name="Treffers L.W."/>
            <person name="Verlaan-de Vries M."/>
            <person name="Olsen J.V."/>
            <person name="Vertegaal A.C."/>
        </authorList>
    </citation>
    <scope>SUMOYLATION [LARGE SCALE ANALYSIS] AT LYS-101</scope>
    <scope>IDENTIFICATION BY MASS SPECTROMETRY [LARGE SCALE ANALYSIS]</scope>
</reference>
<reference key="14">
    <citation type="journal article" date="2017" name="Nat. Struct. Mol. Biol.">
        <title>Site-specific mapping of the human SUMO proteome reveals co-modification with phosphorylation.</title>
        <authorList>
            <person name="Hendriks I.A."/>
            <person name="Lyon D."/>
            <person name="Young C."/>
            <person name="Jensen L.J."/>
            <person name="Vertegaal A.C."/>
            <person name="Nielsen M.L."/>
        </authorList>
    </citation>
    <scope>SUMOYLATION [LARGE SCALE ANALYSIS] AT LYS-67 AND LYS-101</scope>
    <scope>IDENTIFICATION BY MASS SPECTROMETRY [LARGE SCALE ANALYSIS]</scope>
</reference>
<protein>
    <recommendedName>
        <fullName>High mobility group nucleosome-binding domain-containing protein 5</fullName>
    </recommendedName>
    <alternativeName>
        <fullName>Nucleosome-binding protein 1</fullName>
    </alternativeName>
</protein>
<feature type="chain" id="PRO_0000206717" description="High mobility group nucleosome-binding domain-containing protein 5">
    <location>
        <begin position="1"/>
        <end position="282"/>
    </location>
</feature>
<feature type="region of interest" description="Disordered" evidence="2">
    <location>
        <begin position="1"/>
        <end position="282"/>
    </location>
</feature>
<feature type="compositionally biased region" description="Basic residues" evidence="2">
    <location>
        <begin position="37"/>
        <end position="46"/>
    </location>
</feature>
<feature type="compositionally biased region" description="Basic and acidic residues" evidence="2">
    <location>
        <begin position="81"/>
        <end position="119"/>
    </location>
</feature>
<feature type="compositionally biased region" description="Acidic residues" evidence="2">
    <location>
        <begin position="125"/>
        <end position="138"/>
    </location>
</feature>
<feature type="compositionally biased region" description="Basic and acidic residues" evidence="2">
    <location>
        <begin position="139"/>
        <end position="152"/>
    </location>
</feature>
<feature type="compositionally biased region" description="Basic and acidic residues" evidence="2">
    <location>
        <begin position="158"/>
        <end position="256"/>
    </location>
</feature>
<feature type="compositionally biased region" description="Acidic residues" evidence="2">
    <location>
        <begin position="257"/>
        <end position="270"/>
    </location>
</feature>
<feature type="compositionally biased region" description="Basic and acidic residues" evidence="2">
    <location>
        <begin position="271"/>
        <end position="282"/>
    </location>
</feature>
<feature type="modified residue" description="Phosphothreonine" evidence="6 7">
    <location>
        <position position="31"/>
    </location>
</feature>
<feature type="modified residue" description="Phosphotyrosine" evidence="5">
    <location>
        <position position="76"/>
    </location>
</feature>
<feature type="modified residue" description="Phosphoserine" evidence="7">
    <location>
        <position position="93"/>
    </location>
</feature>
<feature type="cross-link" description="Glycyl lysine isopeptide (Lys-Gly) (interchain with G-Cter in SUMO2)" evidence="9 11">
    <location>
        <position position="67"/>
    </location>
</feature>
<feature type="cross-link" description="Glycyl lysine isopeptide (Lys-Gly) (interchain with G-Cter in SUMO1); alternate" evidence="8">
    <location>
        <position position="101"/>
    </location>
</feature>
<feature type="cross-link" description="Glycyl lysine isopeptide (Lys-Gly) (interchain with G-Cter in SUMO2); alternate" evidence="8 9 10 11">
    <location>
        <position position="101"/>
    </location>
</feature>
<feature type="cross-link" description="Glycyl lysine isopeptide (Lys-Gly) (interchain with G-Cter in SUMO2)" evidence="9">
    <location>
        <position position="124"/>
    </location>
</feature>
<organism>
    <name type="scientific">Homo sapiens</name>
    <name type="common">Human</name>
    <dbReference type="NCBI Taxonomy" id="9606"/>
    <lineage>
        <taxon>Eukaryota</taxon>
        <taxon>Metazoa</taxon>
        <taxon>Chordata</taxon>
        <taxon>Craniata</taxon>
        <taxon>Vertebrata</taxon>
        <taxon>Euteleostomi</taxon>
        <taxon>Mammalia</taxon>
        <taxon>Eutheria</taxon>
        <taxon>Euarchontoglires</taxon>
        <taxon>Primates</taxon>
        <taxon>Haplorrhini</taxon>
        <taxon>Catarrhini</taxon>
        <taxon>Hominidae</taxon>
        <taxon>Homo</taxon>
    </lineage>
</organism>